<proteinExistence type="inferred from homology"/>
<protein>
    <recommendedName>
        <fullName evidence="1">ATP-dependent RNA helicase RhlB</fullName>
        <ecNumber evidence="1">3.6.4.13</ecNumber>
    </recommendedName>
</protein>
<reference key="1">
    <citation type="submission" date="2006-06" db="EMBL/GenBank/DDBJ databases">
        <title>Complete sequence of Pseudoalteromonas atlantica T6c.</title>
        <authorList>
            <consortium name="US DOE Joint Genome Institute"/>
            <person name="Copeland A."/>
            <person name="Lucas S."/>
            <person name="Lapidus A."/>
            <person name="Barry K."/>
            <person name="Detter J.C."/>
            <person name="Glavina del Rio T."/>
            <person name="Hammon N."/>
            <person name="Israni S."/>
            <person name="Dalin E."/>
            <person name="Tice H."/>
            <person name="Pitluck S."/>
            <person name="Saunders E."/>
            <person name="Brettin T."/>
            <person name="Bruce D."/>
            <person name="Han C."/>
            <person name="Tapia R."/>
            <person name="Gilna P."/>
            <person name="Schmutz J."/>
            <person name="Larimer F."/>
            <person name="Land M."/>
            <person name="Hauser L."/>
            <person name="Kyrpides N."/>
            <person name="Kim E."/>
            <person name="Karls A.C."/>
            <person name="Bartlett D."/>
            <person name="Higgins B.P."/>
            <person name="Richardson P."/>
        </authorList>
    </citation>
    <scope>NUCLEOTIDE SEQUENCE [LARGE SCALE GENOMIC DNA]</scope>
    <source>
        <strain>T6c / ATCC BAA-1087</strain>
    </source>
</reference>
<gene>
    <name evidence="1" type="primary">rhlB</name>
    <name type="ordered locus">Patl_4221</name>
</gene>
<keyword id="KW-0067">ATP-binding</keyword>
<keyword id="KW-0963">Cytoplasm</keyword>
<keyword id="KW-0347">Helicase</keyword>
<keyword id="KW-0378">Hydrolase</keyword>
<keyword id="KW-0547">Nucleotide-binding</keyword>
<keyword id="KW-0694">RNA-binding</keyword>
<feature type="chain" id="PRO_1000082850" description="ATP-dependent RNA helicase RhlB">
    <location>
        <begin position="1"/>
        <end position="421"/>
    </location>
</feature>
<feature type="domain" description="Helicase ATP-binding" evidence="1">
    <location>
        <begin position="40"/>
        <end position="216"/>
    </location>
</feature>
<feature type="domain" description="Helicase C-terminal" evidence="1">
    <location>
        <begin position="240"/>
        <end position="387"/>
    </location>
</feature>
<feature type="region of interest" description="Disordered" evidence="2">
    <location>
        <begin position="389"/>
        <end position="421"/>
    </location>
</feature>
<feature type="short sequence motif" description="Q motif">
    <location>
        <begin position="9"/>
        <end position="37"/>
    </location>
</feature>
<feature type="short sequence motif" description="DEAD box">
    <location>
        <begin position="162"/>
        <end position="165"/>
    </location>
</feature>
<feature type="compositionally biased region" description="Polar residues" evidence="2">
    <location>
        <begin position="403"/>
        <end position="415"/>
    </location>
</feature>
<feature type="binding site" evidence="1">
    <location>
        <begin position="53"/>
        <end position="60"/>
    </location>
    <ligand>
        <name>ATP</name>
        <dbReference type="ChEBI" id="CHEBI:30616"/>
    </ligand>
</feature>
<accession>Q15N18</accession>
<evidence type="ECO:0000255" key="1">
    <source>
        <dbReference type="HAMAP-Rule" id="MF_00661"/>
    </source>
</evidence>
<evidence type="ECO:0000256" key="2">
    <source>
        <dbReference type="SAM" id="MobiDB-lite"/>
    </source>
</evidence>
<dbReference type="EC" id="3.6.4.13" evidence="1"/>
<dbReference type="EMBL" id="CP000388">
    <property type="protein sequence ID" value="ABG42720.1"/>
    <property type="molecule type" value="Genomic_DNA"/>
</dbReference>
<dbReference type="RefSeq" id="WP_006995006.1">
    <property type="nucleotide sequence ID" value="NC_008228.1"/>
</dbReference>
<dbReference type="SMR" id="Q15N18"/>
<dbReference type="STRING" id="342610.Patl_4221"/>
<dbReference type="KEGG" id="pat:Patl_4221"/>
<dbReference type="eggNOG" id="COG0513">
    <property type="taxonomic scope" value="Bacteria"/>
</dbReference>
<dbReference type="HOGENOM" id="CLU_003041_1_3_6"/>
<dbReference type="OrthoDB" id="9805696at2"/>
<dbReference type="Proteomes" id="UP000001981">
    <property type="component" value="Chromosome"/>
</dbReference>
<dbReference type="GO" id="GO:0005829">
    <property type="term" value="C:cytosol"/>
    <property type="evidence" value="ECO:0007669"/>
    <property type="project" value="TreeGrafter"/>
</dbReference>
<dbReference type="GO" id="GO:0005524">
    <property type="term" value="F:ATP binding"/>
    <property type="evidence" value="ECO:0007669"/>
    <property type="project" value="UniProtKB-UniRule"/>
</dbReference>
<dbReference type="GO" id="GO:0016887">
    <property type="term" value="F:ATP hydrolysis activity"/>
    <property type="evidence" value="ECO:0007669"/>
    <property type="project" value="RHEA"/>
</dbReference>
<dbReference type="GO" id="GO:0003723">
    <property type="term" value="F:RNA binding"/>
    <property type="evidence" value="ECO:0007669"/>
    <property type="project" value="UniProtKB-UniRule"/>
</dbReference>
<dbReference type="GO" id="GO:0003724">
    <property type="term" value="F:RNA helicase activity"/>
    <property type="evidence" value="ECO:0007669"/>
    <property type="project" value="UniProtKB-UniRule"/>
</dbReference>
<dbReference type="GO" id="GO:0006401">
    <property type="term" value="P:RNA catabolic process"/>
    <property type="evidence" value="ECO:0007669"/>
    <property type="project" value="UniProtKB-UniRule"/>
</dbReference>
<dbReference type="CDD" id="cd00268">
    <property type="entry name" value="DEADc"/>
    <property type="match status" value="1"/>
</dbReference>
<dbReference type="CDD" id="cd18787">
    <property type="entry name" value="SF2_C_DEAD"/>
    <property type="match status" value="1"/>
</dbReference>
<dbReference type="FunFam" id="3.40.50.300:FF:000312">
    <property type="entry name" value="ATP-dependent RNA helicase RhlB"/>
    <property type="match status" value="1"/>
</dbReference>
<dbReference type="Gene3D" id="3.40.50.300">
    <property type="entry name" value="P-loop containing nucleotide triphosphate hydrolases"/>
    <property type="match status" value="2"/>
</dbReference>
<dbReference type="HAMAP" id="MF_00661">
    <property type="entry name" value="DEAD_helicase_RhlB"/>
    <property type="match status" value="1"/>
</dbReference>
<dbReference type="InterPro" id="IPR011545">
    <property type="entry name" value="DEAD/DEAH_box_helicase_dom"/>
</dbReference>
<dbReference type="InterPro" id="IPR050079">
    <property type="entry name" value="DEAD_box_RNA_helicase"/>
</dbReference>
<dbReference type="InterPro" id="IPR014001">
    <property type="entry name" value="Helicase_ATP-bd"/>
</dbReference>
<dbReference type="InterPro" id="IPR001650">
    <property type="entry name" value="Helicase_C-like"/>
</dbReference>
<dbReference type="InterPro" id="IPR027417">
    <property type="entry name" value="P-loop_NTPase"/>
</dbReference>
<dbReference type="InterPro" id="IPR000629">
    <property type="entry name" value="RNA-helicase_DEAD-box_CS"/>
</dbReference>
<dbReference type="InterPro" id="IPR023554">
    <property type="entry name" value="RNA_helicase_ATP-dep_RhlB"/>
</dbReference>
<dbReference type="InterPro" id="IPR014014">
    <property type="entry name" value="RNA_helicase_DEAD_Q_motif"/>
</dbReference>
<dbReference type="NCBIfam" id="NF003419">
    <property type="entry name" value="PRK04837.1"/>
    <property type="match status" value="1"/>
</dbReference>
<dbReference type="PANTHER" id="PTHR47959:SF10">
    <property type="entry name" value="ATP-DEPENDENT RNA HELICASE RHLB"/>
    <property type="match status" value="1"/>
</dbReference>
<dbReference type="PANTHER" id="PTHR47959">
    <property type="entry name" value="ATP-DEPENDENT RNA HELICASE RHLE-RELATED"/>
    <property type="match status" value="1"/>
</dbReference>
<dbReference type="Pfam" id="PF00270">
    <property type="entry name" value="DEAD"/>
    <property type="match status" value="1"/>
</dbReference>
<dbReference type="Pfam" id="PF00271">
    <property type="entry name" value="Helicase_C"/>
    <property type="match status" value="1"/>
</dbReference>
<dbReference type="SMART" id="SM00487">
    <property type="entry name" value="DEXDc"/>
    <property type="match status" value="1"/>
</dbReference>
<dbReference type="SMART" id="SM00490">
    <property type="entry name" value="HELICc"/>
    <property type="match status" value="1"/>
</dbReference>
<dbReference type="SUPFAM" id="SSF52540">
    <property type="entry name" value="P-loop containing nucleoside triphosphate hydrolases"/>
    <property type="match status" value="1"/>
</dbReference>
<dbReference type="PROSITE" id="PS00039">
    <property type="entry name" value="DEAD_ATP_HELICASE"/>
    <property type="match status" value="1"/>
</dbReference>
<dbReference type="PROSITE" id="PS51192">
    <property type="entry name" value="HELICASE_ATP_BIND_1"/>
    <property type="match status" value="1"/>
</dbReference>
<dbReference type="PROSITE" id="PS51194">
    <property type="entry name" value="HELICASE_CTER"/>
    <property type="match status" value="1"/>
</dbReference>
<dbReference type="PROSITE" id="PS51195">
    <property type="entry name" value="Q_MOTIF"/>
    <property type="match status" value="1"/>
</dbReference>
<sequence>MQTTHLTETHFADLPINEQVVKALSAANFSHCTPIQALSLPPLLEGNDIAGQAQTGTGKTIAFLVATFHYLLSNPQPTKKQPRAIIMAPTRELAVQIFNDAELLSQHTGLSLGLIYGGEGYQSQREKLEEGVDIIIGTTGRIIDYYKQNIFSLAGIQVAVLDEADRMFDLGFIKDIRYLFNRMPKPTERLSMLFSATLSYRVQELAYEHMDNPTHVQVEPERKTGTRIKEELFYPSDEDKMALLLSLMEEEWPDKAIVFANTKHSCEKVADWLQADGHRVGLLSGDVPQNKRLKILEDFTSGKLDILVATDVAARGLHIPMVSHVFNYDLPDDAEDYVHRIGRTGRAGQSGSSISFACERYALNLPAIETYIEHAIPVTEYQADALLRDVTPPKPRHKKRMQNGRNPQKRQSSGSRNRRKP</sequence>
<comment type="function">
    <text evidence="1">DEAD-box RNA helicase involved in RNA degradation. Has RNA-dependent ATPase activity and unwinds double-stranded RNA.</text>
</comment>
<comment type="catalytic activity">
    <reaction evidence="1">
        <text>ATP + H2O = ADP + phosphate + H(+)</text>
        <dbReference type="Rhea" id="RHEA:13065"/>
        <dbReference type="ChEBI" id="CHEBI:15377"/>
        <dbReference type="ChEBI" id="CHEBI:15378"/>
        <dbReference type="ChEBI" id="CHEBI:30616"/>
        <dbReference type="ChEBI" id="CHEBI:43474"/>
        <dbReference type="ChEBI" id="CHEBI:456216"/>
        <dbReference type="EC" id="3.6.4.13"/>
    </reaction>
</comment>
<comment type="subunit">
    <text evidence="1">Component of the RNA degradosome, which is a multiprotein complex involved in RNA processing and mRNA degradation.</text>
</comment>
<comment type="subcellular location">
    <subcellularLocation>
        <location evidence="1">Cytoplasm</location>
    </subcellularLocation>
</comment>
<comment type="similarity">
    <text evidence="1">Belongs to the DEAD box helicase family. RhlB subfamily.</text>
</comment>
<name>RHLB_PSEA6</name>
<organism>
    <name type="scientific">Pseudoalteromonas atlantica (strain T6c / ATCC BAA-1087)</name>
    <dbReference type="NCBI Taxonomy" id="3042615"/>
    <lineage>
        <taxon>Bacteria</taxon>
        <taxon>Pseudomonadati</taxon>
        <taxon>Pseudomonadota</taxon>
        <taxon>Gammaproteobacteria</taxon>
        <taxon>Alteromonadales</taxon>
        <taxon>Alteromonadaceae</taxon>
        <taxon>Paraglaciecola</taxon>
    </lineage>
</organism>